<evidence type="ECO:0000250" key="1"/>
<evidence type="ECO:0000250" key="2">
    <source>
        <dbReference type="UniProtKB" id="Q60974"/>
    </source>
</evidence>
<evidence type="ECO:0000250" key="3">
    <source>
        <dbReference type="UniProtKB" id="Q8QG78"/>
    </source>
</evidence>
<evidence type="ECO:0000255" key="4"/>
<evidence type="ECO:0000255" key="5">
    <source>
        <dbReference type="PROSITE-ProRule" id="PRU00624"/>
    </source>
</evidence>
<evidence type="ECO:0000256" key="6">
    <source>
        <dbReference type="SAM" id="MobiDB-lite"/>
    </source>
</evidence>
<evidence type="ECO:0000305" key="7"/>
<sequence>MSSSGYPPNQGAFSTEQGRYSSHPVQYTFPSSRHQQEFPVPEYRSSHLEASQLLQQQQLRRRPSLLSEFHPVSDRPQDRRQGYEQQYHSVTQNEHEALESKRPRLDVSDSHYRVGAASVVPLVPTIQEGVRVQSEVKKEQGLPSKHETTSSPLSGQPGEEQEASPSKLSKEELIQSMDRVDREIAKVEQQILKLKKKQQQLEEEAAKPPEPEKPVSPPPVEQKHRSIVQIIYDENRKKAEEAHKILEGLGPKVELPLYNQPSDTKVYHENIKTNQVMRKKLILFFKRRNHARKLREQNICQRYDQLMEAWEKKVDRIENNPRRKAKESKTREYYEKQFPEIRKQREQQERFQRVGQRGAGLSATIARSEHEISEIIDGLSEQENNEKQMRQLSVIPPMMFDAEQRRVKFINMNGLMEDPMKVYKDRQFMNVWTDHEKEIFKEKFVQHPKNFGLIASYLERKTVSDCVLYYYLTKKNENFKALVRRNYPKRRGRNQQQITRPAQEEKEIEKVEEEKAERNDKKEEERREEEEKEEKEELRDGTKDRTDAIAEDGEDKEQSTPRGRKTANSQGRRKGRITRSMASEAAAAANAASTATTAPATTTSTTATTTTAALVPVAPPPEEPTPPPTQEQSLVEHGRNWGAIAKMVGSKSESQCKNFYFNYKRRHNLDNLLQQHKQKSSRRPREERDVSQCESVASTVSAQEDEENEASNEEENAEDSEGAENSSDTESAPSPSPAEAAKLGDDAVDRTTSSVSIEAPPEQDAASKSVSDSSPTPTVENIKPPETQYTELKVKEEISTETEEAMEVEERSQGAEIKSTLSLPVQTKAEPDEVESKPSESAEVKIEEDTKDQDMERLMDRAEATDMVYAPPLHISRGRQESQSDNDSSATCSADEEVDGEPERPRIYTLDSKPSLLNPAGTILISSSMKQGPMDLQQLQHRAAVIPPMASCSPCNITTGTSNFSMYQRHLYENNLLEEQRQRQEQLSLESRMSASPGNMSKSPNMDWEGKSVYMPYTEVKRAFEHEAQMQNVARSVSPYRLSPREVSRASPQVDMNPARYCVPPVLQPAPHQVITSLSDGARLPVTRPTRPPPPLIPSSKTSATSSDKPSFITGGSISQGTPGTYLTSLSQSYSQETVKPSVGSISLGLPRQQESAKTGSVTYIKQEEFSPRGQSSQPEGLLVRAQHEGVVRGTMTAIQEGSITRGTPATKVPIEAVSTLRGSITQGTPALSQSGIAADVLLKTTITRLATEDIGSPERCRDETSAKGHVIYEGKSGHIVSYDTAIKNMREGTRSPRTAPEVTLKRTFDTMEGNIKQAMSVREAAVSGPMEGLICRTLPKGSTHAEIKDRQVLSGSIMKGTPRTTSDSFEDGLKYAKQIKLESPPIRSFEGAISKGKPYECVTTIKEMGRSIHEIPRQDLGSQESRKTPESSRQIIEGSISQGTPIKYEGTSGQSAIKHNVKSLITGPSNLSRGLPQMEVMPENLKMGERSKYEDTKSSEAIRSRHTSVVSSGPSVLRSTLHEASKSQLSPGVYEDNNARRTPVNYPSPMSRSSPMARSAEVGLTPGKSSSHERKSTLTPTQRENIVVKSPVPGVDPTAAHSPFDPHLRGAPPGDVYRTHLPPHLDPALQFHRPLDPAAAAAYLFQRQLSPTPGYPSQYQLYAMENTRQTILNDYITSQQMQVNLRPDVARGLSPRDQGLAIPYPGARGIIDLTNMPPAILVPHPGGTSTPPMDRITYIPGTQLAFPPRPYNPASMSPGHPTHLAAANSVSAERERERERDRERDREREKEQRERERDRERERERLAAAPSDHYLRPVSEQPGRPGSHGFVRSPSPSVRAQESIMQQRPSIFQGTNGKSVITPLDAAQLRIMPPTPGAASITQGIPASRYSTAADALAALVDAAASAPQMEVVKPKEMKHDPARSEESLSRRNVLEQQQQQQQIDCERRVMQSPYTSSSFSGSKSQGQPSPAVYSEAGKEKTAHTKSRYVEELRMRGKTTITAANFIDVIITQQIASDKDGRDRNSQSSDSSSSHSSHRYDAPRDTIEVISPANSPVQEKESYPPEIPKSSQTESESSRKYEGQPNRYRQQQESPSPQQTIPGHVPQTHRLITLADHICQIITQDFARNQPVNQALQQPPASTFQSTNPSSTPVRTKASSRFSPESQVQPVHNQRPASRVSPENVLDRPRGRPGKSPDRGHISEPYEPISPPQAPLLHAKQDSMLLLSQRQEPPEQRNDSRSPGNISYLPSFFTKLENTSPMVMYKKQEIFRKLNSSGGGDSEMAAAQPGTEIFNLPAVTTSGAISSRGHSFADPASNLGLEDIIRKALMGNFDDKSEDHSVLVGVAQGNPSGTQNSEARREEANPSPNSGGGTHKQKLISKYGSRKTKSPISGSQTYLGAERPSSVSSVHSEGDYRQASAWAWEDRPSSTGSTQFPYNPLTMGMLNSTPPSSMSCAPTSMTQTSAHQQSRIWEREPAPLLSEQYETLSDSDE</sequence>
<keyword id="KW-0090">Biological rhythms</keyword>
<keyword id="KW-0156">Chromatin regulator</keyword>
<keyword id="KW-0175">Coiled coil</keyword>
<keyword id="KW-0238">DNA-binding</keyword>
<keyword id="KW-0539">Nucleus</keyword>
<keyword id="KW-1185">Reference proteome</keyword>
<keyword id="KW-0677">Repeat</keyword>
<keyword id="KW-0678">Repressor</keyword>
<keyword id="KW-0804">Transcription</keyword>
<keyword id="KW-0805">Transcription regulation</keyword>
<proteinExistence type="evidence at transcript level"/>
<feature type="chain" id="PRO_0000055621" description="Nuclear receptor corepressor 1">
    <location>
        <begin position="1"/>
        <end position="2494"/>
    </location>
</feature>
<feature type="domain" description="SANT 1" evidence="5">
    <location>
        <begin position="427"/>
        <end position="478"/>
    </location>
</feature>
<feature type="domain" description="SANT 2" evidence="5">
    <location>
        <begin position="622"/>
        <end position="668"/>
    </location>
</feature>
<feature type="region of interest" description="Disordered" evidence="6">
    <location>
        <begin position="1"/>
        <end position="38"/>
    </location>
</feature>
<feature type="region of interest" description="Disordered" evidence="6">
    <location>
        <begin position="53"/>
        <end position="106"/>
    </location>
</feature>
<feature type="region of interest" description="Disordered" evidence="6">
    <location>
        <begin position="134"/>
        <end position="170"/>
    </location>
</feature>
<feature type="region of interest" description="Interaction with tbl1xr1" evidence="1">
    <location>
        <begin position="154"/>
        <end position="304"/>
    </location>
</feature>
<feature type="region of interest" description="Disordered" evidence="6">
    <location>
        <begin position="198"/>
        <end position="222"/>
    </location>
</feature>
<feature type="region of interest" description="Disordered" evidence="6">
    <location>
        <begin position="488"/>
        <end position="638"/>
    </location>
</feature>
<feature type="region of interest" description="Disordered" evidence="6">
    <location>
        <begin position="671"/>
        <end position="913"/>
    </location>
</feature>
<feature type="region of interest" description="Disordered" evidence="6">
    <location>
        <begin position="981"/>
        <end position="1007"/>
    </location>
</feature>
<feature type="region of interest" description="Disordered" evidence="6">
    <location>
        <begin position="1081"/>
        <end position="1124"/>
    </location>
</feature>
<feature type="region of interest" description="Disordered" evidence="6">
    <location>
        <begin position="1413"/>
        <end position="1434"/>
    </location>
</feature>
<feature type="region of interest" description="Disordered" evidence="6">
    <location>
        <begin position="1488"/>
        <end position="1585"/>
    </location>
</feature>
<feature type="region of interest" description="Disordered" evidence="6">
    <location>
        <begin position="1745"/>
        <end position="1845"/>
    </location>
</feature>
<feature type="region of interest" description="Disordered" evidence="6">
    <location>
        <begin position="1912"/>
        <end position="1987"/>
    </location>
</feature>
<feature type="region of interest" description="Disordered" evidence="6">
    <location>
        <begin position="2018"/>
        <end position="2105"/>
    </location>
</feature>
<feature type="region of interest" description="Disordered" evidence="6">
    <location>
        <begin position="2135"/>
        <end position="2216"/>
    </location>
</feature>
<feature type="region of interest" description="Disordered" evidence="6">
    <location>
        <begin position="2346"/>
        <end position="2413"/>
    </location>
</feature>
<feature type="region of interest" description="Disordered" evidence="6">
    <location>
        <begin position="2446"/>
        <end position="2494"/>
    </location>
</feature>
<feature type="coiled-coil region" evidence="4">
    <location>
        <begin position="168"/>
        <end position="208"/>
    </location>
</feature>
<feature type="coiled-coil region" evidence="4">
    <location>
        <begin position="502"/>
        <end position="549"/>
    </location>
</feature>
<feature type="coiled-coil region" evidence="4">
    <location>
        <begin position="698"/>
        <end position="726"/>
    </location>
</feature>
<feature type="coiled-coil region" evidence="4">
    <location>
        <begin position="1771"/>
        <end position="1810"/>
    </location>
</feature>
<feature type="short sequence motif" description="CORNR box 1">
    <location>
        <begin position="2008"/>
        <end position="2012"/>
    </location>
</feature>
<feature type="short sequence motif" description="CORNR box 2">
    <location>
        <begin position="2119"/>
        <end position="2123"/>
    </location>
</feature>
<feature type="short sequence motif" description="CORNR box 3">
    <location>
        <begin position="2322"/>
        <end position="2326"/>
    </location>
</feature>
<feature type="compositionally biased region" description="Polar residues" evidence="6">
    <location>
        <begin position="1"/>
        <end position="33"/>
    </location>
</feature>
<feature type="compositionally biased region" description="Basic and acidic residues" evidence="6">
    <location>
        <begin position="71"/>
        <end position="82"/>
    </location>
</feature>
<feature type="compositionally biased region" description="Polar residues" evidence="6">
    <location>
        <begin position="83"/>
        <end position="92"/>
    </location>
</feature>
<feature type="compositionally biased region" description="Basic and acidic residues" evidence="6">
    <location>
        <begin position="93"/>
        <end position="106"/>
    </location>
</feature>
<feature type="compositionally biased region" description="Basic and acidic residues" evidence="6">
    <location>
        <begin position="134"/>
        <end position="148"/>
    </location>
</feature>
<feature type="compositionally biased region" description="Basic and acidic residues" evidence="6">
    <location>
        <begin position="204"/>
        <end position="213"/>
    </location>
</feature>
<feature type="compositionally biased region" description="Basic and acidic residues" evidence="6">
    <location>
        <begin position="502"/>
        <end position="525"/>
    </location>
</feature>
<feature type="compositionally biased region" description="Basic and acidic residues" evidence="6">
    <location>
        <begin position="535"/>
        <end position="548"/>
    </location>
</feature>
<feature type="compositionally biased region" description="Low complexity" evidence="6">
    <location>
        <begin position="582"/>
        <end position="616"/>
    </location>
</feature>
<feature type="compositionally biased region" description="Pro residues" evidence="6">
    <location>
        <begin position="617"/>
        <end position="629"/>
    </location>
</feature>
<feature type="compositionally biased region" description="Polar residues" evidence="6">
    <location>
        <begin position="692"/>
        <end position="702"/>
    </location>
</feature>
<feature type="compositionally biased region" description="Acidic residues" evidence="6">
    <location>
        <begin position="703"/>
        <end position="722"/>
    </location>
</feature>
<feature type="compositionally biased region" description="Low complexity" evidence="6">
    <location>
        <begin position="723"/>
        <end position="741"/>
    </location>
</feature>
<feature type="compositionally biased region" description="Polar residues" evidence="6">
    <location>
        <begin position="766"/>
        <end position="779"/>
    </location>
</feature>
<feature type="compositionally biased region" description="Basic and acidic residues" evidence="6">
    <location>
        <begin position="829"/>
        <end position="864"/>
    </location>
</feature>
<feature type="compositionally biased region" description="Polar residues" evidence="6">
    <location>
        <begin position="881"/>
        <end position="892"/>
    </location>
</feature>
<feature type="compositionally biased region" description="Polar residues" evidence="6">
    <location>
        <begin position="993"/>
        <end position="1004"/>
    </location>
</feature>
<feature type="compositionally biased region" description="Polar residues" evidence="6">
    <location>
        <begin position="1104"/>
        <end position="1124"/>
    </location>
</feature>
<feature type="compositionally biased region" description="Basic and acidic residues" evidence="6">
    <location>
        <begin position="1488"/>
        <end position="1504"/>
    </location>
</feature>
<feature type="compositionally biased region" description="Polar residues" evidence="6">
    <location>
        <begin position="1508"/>
        <end position="1519"/>
    </location>
</feature>
<feature type="compositionally biased region" description="Low complexity" evidence="6">
    <location>
        <begin position="1548"/>
        <end position="1561"/>
    </location>
</feature>
<feature type="compositionally biased region" description="Basic and acidic residues" evidence="6">
    <location>
        <begin position="1773"/>
        <end position="1807"/>
    </location>
</feature>
<feature type="compositionally biased region" description="Polar residues" evidence="6">
    <location>
        <begin position="1835"/>
        <end position="1845"/>
    </location>
</feature>
<feature type="compositionally biased region" description="Basic and acidic residues" evidence="6">
    <location>
        <begin position="1914"/>
        <end position="1935"/>
    </location>
</feature>
<feature type="compositionally biased region" description="Low complexity" evidence="6">
    <location>
        <begin position="1953"/>
        <end position="1972"/>
    </location>
</feature>
<feature type="compositionally biased region" description="Basic and acidic residues" evidence="6">
    <location>
        <begin position="1978"/>
        <end position="1987"/>
    </location>
</feature>
<feature type="compositionally biased region" description="Low complexity" evidence="6">
    <location>
        <begin position="2027"/>
        <end position="2036"/>
    </location>
</feature>
<feature type="compositionally biased region" description="Basic and acidic residues" evidence="6">
    <location>
        <begin position="2039"/>
        <end position="2048"/>
    </location>
</feature>
<feature type="compositionally biased region" description="Polar residues" evidence="6">
    <location>
        <begin position="2088"/>
        <end position="2102"/>
    </location>
</feature>
<feature type="compositionally biased region" description="Polar residues" evidence="6">
    <location>
        <begin position="2135"/>
        <end position="2177"/>
    </location>
</feature>
<feature type="compositionally biased region" description="Basic and acidic residues" evidence="6">
    <location>
        <begin position="2186"/>
        <end position="2205"/>
    </location>
</feature>
<feature type="compositionally biased region" description="Basic residues" evidence="6">
    <location>
        <begin position="2376"/>
        <end position="2390"/>
    </location>
</feature>
<feature type="compositionally biased region" description="Polar residues" evidence="6">
    <location>
        <begin position="2446"/>
        <end position="2472"/>
    </location>
</feature>
<feature type="compositionally biased region" description="Polar residues" evidence="6">
    <location>
        <begin position="2485"/>
        <end position="2494"/>
    </location>
</feature>
<reference key="1">
    <citation type="submission" date="2005-07" db="EMBL/GenBank/DDBJ databases">
        <authorList>
            <consortium name="NIH - Xenopus Gene Collection (XGC) project"/>
        </authorList>
    </citation>
    <scope>NUCLEOTIDE SEQUENCE [LARGE SCALE MRNA]</scope>
    <source>
        <tissue>Embryo</tissue>
    </source>
</reference>
<comment type="function">
    <text evidence="2 3">Mediates transcriptional repression by certain nuclear receptors. Participates in complexes which promote histone deacetylation and the formation of repressive chromatin structures which may impede access by the basal transcription machinery (By similarity). In association with hdac3, may play a role in the regulation of the circadian clock (By similarity).</text>
</comment>
<comment type="subunit">
    <text evidence="1">Forms a large corepressor complex that contains sin3a/b, histone deacetylases hdac1 and hdac2, rbbp4 and possibly rbbp7. Interacts with the thyroid receptor (TR, composed of rxra and thrb) and the retinoid acid receptor (RAR, composed of rxra and rara) in the absence of ligand. Interacts with tbl1xr1. Interacts with zbtb33/kaiso (By similarity).</text>
</comment>
<comment type="subcellular location">
    <subcellularLocation>
        <location evidence="5">Nucleus</location>
    </subcellularLocation>
</comment>
<comment type="domain">
    <text evidence="1">The CORNR box motifs in the C-terminal region may be necessary and sufficient for binding to unligated nuclear hormone receptors. Sequences flanking these motifs may determine the precise nuclear hormone receptor specificity (By similarity).</text>
</comment>
<comment type="similarity">
    <text evidence="7">Belongs to the N-CoR nuclear receptor corepressors family.</text>
</comment>
<accession>Q4KKX4</accession>
<organism>
    <name type="scientific">Xenopus tropicalis</name>
    <name type="common">Western clawed frog</name>
    <name type="synonym">Silurana tropicalis</name>
    <dbReference type="NCBI Taxonomy" id="8364"/>
    <lineage>
        <taxon>Eukaryota</taxon>
        <taxon>Metazoa</taxon>
        <taxon>Chordata</taxon>
        <taxon>Craniata</taxon>
        <taxon>Vertebrata</taxon>
        <taxon>Euteleostomi</taxon>
        <taxon>Amphibia</taxon>
        <taxon>Batrachia</taxon>
        <taxon>Anura</taxon>
        <taxon>Pipoidea</taxon>
        <taxon>Pipidae</taxon>
        <taxon>Xenopodinae</taxon>
        <taxon>Xenopus</taxon>
        <taxon>Silurana</taxon>
    </lineage>
</organism>
<gene>
    <name type="primary">ncor1</name>
</gene>
<protein>
    <recommendedName>
        <fullName>Nuclear receptor corepressor 1</fullName>
        <shortName>N-CoR</shortName>
        <shortName>N-CoR1</shortName>
        <shortName>xN-CoR</shortName>
    </recommendedName>
</protein>
<name>NCOR1_XENTR</name>
<dbReference type="EMBL" id="BC099620">
    <property type="protein sequence ID" value="AAH99620.1"/>
    <property type="molecule type" value="mRNA"/>
</dbReference>
<dbReference type="RefSeq" id="NP_001027513.1">
    <property type="nucleotide sequence ID" value="NM_001032342.1"/>
</dbReference>
<dbReference type="SMR" id="Q4KKX4"/>
<dbReference type="FunCoup" id="Q4KKX4">
    <property type="interactions" value="1763"/>
</dbReference>
<dbReference type="STRING" id="8364.ENSXETP00000027709"/>
<dbReference type="PaxDb" id="8364-ENSXETP00000014702"/>
<dbReference type="GeneID" id="613105"/>
<dbReference type="KEGG" id="xtr:613105"/>
<dbReference type="AGR" id="Xenbase:XB-GENE-483288"/>
<dbReference type="CTD" id="9611"/>
<dbReference type="Xenbase" id="XB-GENE-483288">
    <property type="gene designation" value="ncor1"/>
</dbReference>
<dbReference type="eggNOG" id="KOG1878">
    <property type="taxonomic scope" value="Eukaryota"/>
</dbReference>
<dbReference type="InParanoid" id="Q4KKX4"/>
<dbReference type="OrthoDB" id="10258692at2759"/>
<dbReference type="Reactome" id="R-XTR-350054">
    <property type="pathway name" value="Notch-HLH transcription pathway"/>
</dbReference>
<dbReference type="Reactome" id="R-XTR-383280">
    <property type="pathway name" value="Nuclear Receptor transcription pathway"/>
</dbReference>
<dbReference type="Reactome" id="R-XTR-400206">
    <property type="pathway name" value="Regulation of lipid metabolism by PPARalpha"/>
</dbReference>
<dbReference type="Reactome" id="R-XTR-9029569">
    <property type="pathway name" value="NR1H3 &amp; NR1H2 regulate gene expression linked to cholesterol transport and efflux"/>
</dbReference>
<dbReference type="Reactome" id="R-XTR-9623433">
    <property type="pathway name" value="NR1H2 &amp; NR1H3 regulate gene expression to control bile acid homeostasis"/>
</dbReference>
<dbReference type="Reactome" id="R-XTR-9841922">
    <property type="pathway name" value="MLL4 and MLL3 complexes regulate expression of PPARG target genes in adipogenesis and hepatic steatosis"/>
</dbReference>
<dbReference type="Proteomes" id="UP000008143">
    <property type="component" value="Chromosome 2"/>
</dbReference>
<dbReference type="GO" id="GO:0005654">
    <property type="term" value="C:nucleoplasm"/>
    <property type="evidence" value="ECO:0007669"/>
    <property type="project" value="UniProtKB-ARBA"/>
</dbReference>
<dbReference type="GO" id="GO:0032991">
    <property type="term" value="C:protein-containing complex"/>
    <property type="evidence" value="ECO:0007669"/>
    <property type="project" value="UniProtKB-ARBA"/>
</dbReference>
<dbReference type="GO" id="GO:0003677">
    <property type="term" value="F:DNA binding"/>
    <property type="evidence" value="ECO:0007669"/>
    <property type="project" value="UniProtKB-KW"/>
</dbReference>
<dbReference type="GO" id="GO:0006325">
    <property type="term" value="P:chromatin organization"/>
    <property type="evidence" value="ECO:0007669"/>
    <property type="project" value="UniProtKB-KW"/>
</dbReference>
<dbReference type="GO" id="GO:0045892">
    <property type="term" value="P:negative regulation of DNA-templated transcription"/>
    <property type="evidence" value="ECO:0000250"/>
    <property type="project" value="UniProtKB"/>
</dbReference>
<dbReference type="GO" id="GO:0048511">
    <property type="term" value="P:rhythmic process"/>
    <property type="evidence" value="ECO:0007669"/>
    <property type="project" value="UniProtKB-KW"/>
</dbReference>
<dbReference type="CDD" id="cd00167">
    <property type="entry name" value="SANT"/>
    <property type="match status" value="2"/>
</dbReference>
<dbReference type="FunFam" id="1.10.10.60:FF:000026">
    <property type="entry name" value="Nuclear receptor corepressor 2 isoform 1"/>
    <property type="match status" value="1"/>
</dbReference>
<dbReference type="FunFam" id="1.20.5.430:FF:000001">
    <property type="entry name" value="Nuclear receptor corepressor 2 isoform 1"/>
    <property type="match status" value="1"/>
</dbReference>
<dbReference type="Gene3D" id="1.20.5.430">
    <property type="match status" value="1"/>
</dbReference>
<dbReference type="Gene3D" id="1.20.58.1880">
    <property type="match status" value="1"/>
</dbReference>
<dbReference type="Gene3D" id="1.10.10.60">
    <property type="entry name" value="Homeodomain-like"/>
    <property type="match status" value="1"/>
</dbReference>
<dbReference type="InterPro" id="IPR009057">
    <property type="entry name" value="Homeodomain-like_sf"/>
</dbReference>
<dbReference type="InterPro" id="IPR051571">
    <property type="entry name" value="N-CoR_corepressor"/>
</dbReference>
<dbReference type="InterPro" id="IPR031557">
    <property type="entry name" value="N-CoR_GPS2_interact"/>
</dbReference>
<dbReference type="InterPro" id="IPR001005">
    <property type="entry name" value="SANT/Myb"/>
</dbReference>
<dbReference type="InterPro" id="IPR017884">
    <property type="entry name" value="SANT_dom"/>
</dbReference>
<dbReference type="PANTHER" id="PTHR13992">
    <property type="entry name" value="NUCLEAR RECEPTOR CO-REPRESSOR RELATED NCOR"/>
    <property type="match status" value="1"/>
</dbReference>
<dbReference type="PANTHER" id="PTHR13992:SF5">
    <property type="entry name" value="NUCLEAR RECEPTOR COREPRESSOR 1"/>
    <property type="match status" value="1"/>
</dbReference>
<dbReference type="Pfam" id="PF15784">
    <property type="entry name" value="GPS2_interact"/>
    <property type="match status" value="1"/>
</dbReference>
<dbReference type="Pfam" id="PF00249">
    <property type="entry name" value="Myb_DNA-binding"/>
    <property type="match status" value="2"/>
</dbReference>
<dbReference type="SMART" id="SM00717">
    <property type="entry name" value="SANT"/>
    <property type="match status" value="2"/>
</dbReference>
<dbReference type="SUPFAM" id="SSF46689">
    <property type="entry name" value="Homeodomain-like"/>
    <property type="match status" value="2"/>
</dbReference>
<dbReference type="PROSITE" id="PS51293">
    <property type="entry name" value="SANT"/>
    <property type="match status" value="2"/>
</dbReference>